<organism>
    <name type="scientific">Yersinia pseudotuberculosis serotype IB (strain PB1/+)</name>
    <dbReference type="NCBI Taxonomy" id="502801"/>
    <lineage>
        <taxon>Bacteria</taxon>
        <taxon>Pseudomonadati</taxon>
        <taxon>Pseudomonadota</taxon>
        <taxon>Gammaproteobacteria</taxon>
        <taxon>Enterobacterales</taxon>
        <taxon>Yersiniaceae</taxon>
        <taxon>Yersinia</taxon>
    </lineage>
</organism>
<protein>
    <recommendedName>
        <fullName evidence="1">Acetate kinase</fullName>
        <ecNumber evidence="1">2.7.2.1</ecNumber>
    </recommendedName>
    <alternativeName>
        <fullName evidence="1">Acetokinase</fullName>
    </alternativeName>
</protein>
<dbReference type="EC" id="2.7.2.1" evidence="1"/>
<dbReference type="EMBL" id="CP001048">
    <property type="protein sequence ID" value="ACC89651.1"/>
    <property type="molecule type" value="Genomic_DNA"/>
</dbReference>
<dbReference type="RefSeq" id="WP_012413811.1">
    <property type="nucleotide sequence ID" value="NZ_CP009780.1"/>
</dbReference>
<dbReference type="SMR" id="B2K830"/>
<dbReference type="GeneID" id="49785400"/>
<dbReference type="KEGG" id="ypb:YPTS_2691"/>
<dbReference type="PATRIC" id="fig|502801.10.peg.2112"/>
<dbReference type="UniPathway" id="UPA00340">
    <property type="reaction ID" value="UER00458"/>
</dbReference>
<dbReference type="GO" id="GO:0005829">
    <property type="term" value="C:cytosol"/>
    <property type="evidence" value="ECO:0007669"/>
    <property type="project" value="TreeGrafter"/>
</dbReference>
<dbReference type="GO" id="GO:0008776">
    <property type="term" value="F:acetate kinase activity"/>
    <property type="evidence" value="ECO:0007669"/>
    <property type="project" value="UniProtKB-UniRule"/>
</dbReference>
<dbReference type="GO" id="GO:0005524">
    <property type="term" value="F:ATP binding"/>
    <property type="evidence" value="ECO:0007669"/>
    <property type="project" value="UniProtKB-KW"/>
</dbReference>
<dbReference type="GO" id="GO:0000287">
    <property type="term" value="F:magnesium ion binding"/>
    <property type="evidence" value="ECO:0007669"/>
    <property type="project" value="UniProtKB-UniRule"/>
</dbReference>
<dbReference type="GO" id="GO:0006083">
    <property type="term" value="P:acetate metabolic process"/>
    <property type="evidence" value="ECO:0007669"/>
    <property type="project" value="TreeGrafter"/>
</dbReference>
<dbReference type="GO" id="GO:0006085">
    <property type="term" value="P:acetyl-CoA biosynthetic process"/>
    <property type="evidence" value="ECO:0007669"/>
    <property type="project" value="UniProtKB-UniRule"/>
</dbReference>
<dbReference type="CDD" id="cd24010">
    <property type="entry name" value="ASKHA_NBD_AcK_PK"/>
    <property type="match status" value="1"/>
</dbReference>
<dbReference type="FunFam" id="3.30.420.40:FF:000041">
    <property type="entry name" value="Acetate kinase"/>
    <property type="match status" value="1"/>
</dbReference>
<dbReference type="FunFam" id="3.30.420.40:FF:000042">
    <property type="entry name" value="Acetate kinase"/>
    <property type="match status" value="1"/>
</dbReference>
<dbReference type="Gene3D" id="3.30.420.40">
    <property type="match status" value="2"/>
</dbReference>
<dbReference type="HAMAP" id="MF_00020">
    <property type="entry name" value="Acetate_kinase"/>
    <property type="match status" value="1"/>
</dbReference>
<dbReference type="InterPro" id="IPR004372">
    <property type="entry name" value="Ac/propionate_kinase"/>
</dbReference>
<dbReference type="InterPro" id="IPR000890">
    <property type="entry name" value="Aliphatic_acid_kin_short-chain"/>
</dbReference>
<dbReference type="InterPro" id="IPR023865">
    <property type="entry name" value="Aliphatic_acid_kinase_CS"/>
</dbReference>
<dbReference type="InterPro" id="IPR043129">
    <property type="entry name" value="ATPase_NBD"/>
</dbReference>
<dbReference type="NCBIfam" id="TIGR00016">
    <property type="entry name" value="ackA"/>
    <property type="match status" value="1"/>
</dbReference>
<dbReference type="PANTHER" id="PTHR21060">
    <property type="entry name" value="ACETATE KINASE"/>
    <property type="match status" value="1"/>
</dbReference>
<dbReference type="PANTHER" id="PTHR21060:SF21">
    <property type="entry name" value="ACETATE KINASE"/>
    <property type="match status" value="1"/>
</dbReference>
<dbReference type="Pfam" id="PF00871">
    <property type="entry name" value="Acetate_kinase"/>
    <property type="match status" value="1"/>
</dbReference>
<dbReference type="PIRSF" id="PIRSF000722">
    <property type="entry name" value="Acetate_prop_kin"/>
    <property type="match status" value="1"/>
</dbReference>
<dbReference type="PRINTS" id="PR00471">
    <property type="entry name" value="ACETATEKNASE"/>
</dbReference>
<dbReference type="SUPFAM" id="SSF53067">
    <property type="entry name" value="Actin-like ATPase domain"/>
    <property type="match status" value="2"/>
</dbReference>
<dbReference type="PROSITE" id="PS01075">
    <property type="entry name" value="ACETATE_KINASE_1"/>
    <property type="match status" value="1"/>
</dbReference>
<dbReference type="PROSITE" id="PS01076">
    <property type="entry name" value="ACETATE_KINASE_2"/>
    <property type="match status" value="1"/>
</dbReference>
<evidence type="ECO:0000255" key="1">
    <source>
        <dbReference type="HAMAP-Rule" id="MF_00020"/>
    </source>
</evidence>
<reference key="1">
    <citation type="submission" date="2008-04" db="EMBL/GenBank/DDBJ databases">
        <title>Complete sequence of Yersinia pseudotuberculosis PB1/+.</title>
        <authorList>
            <person name="Copeland A."/>
            <person name="Lucas S."/>
            <person name="Lapidus A."/>
            <person name="Glavina del Rio T."/>
            <person name="Dalin E."/>
            <person name="Tice H."/>
            <person name="Bruce D."/>
            <person name="Goodwin L."/>
            <person name="Pitluck S."/>
            <person name="Munk A.C."/>
            <person name="Brettin T."/>
            <person name="Detter J.C."/>
            <person name="Han C."/>
            <person name="Tapia R."/>
            <person name="Schmutz J."/>
            <person name="Larimer F."/>
            <person name="Land M."/>
            <person name="Hauser L."/>
            <person name="Challacombe J.F."/>
            <person name="Green L."/>
            <person name="Lindler L.E."/>
            <person name="Nikolich M.P."/>
            <person name="Richardson P."/>
        </authorList>
    </citation>
    <scope>NUCLEOTIDE SEQUENCE [LARGE SCALE GENOMIC DNA]</scope>
    <source>
        <strain>PB1/+</strain>
    </source>
</reference>
<comment type="function">
    <text evidence="1">Catalyzes the formation of acetyl phosphate from acetate and ATP. Can also catalyze the reverse reaction.</text>
</comment>
<comment type="catalytic activity">
    <reaction evidence="1">
        <text>acetate + ATP = acetyl phosphate + ADP</text>
        <dbReference type="Rhea" id="RHEA:11352"/>
        <dbReference type="ChEBI" id="CHEBI:22191"/>
        <dbReference type="ChEBI" id="CHEBI:30089"/>
        <dbReference type="ChEBI" id="CHEBI:30616"/>
        <dbReference type="ChEBI" id="CHEBI:456216"/>
        <dbReference type="EC" id="2.7.2.1"/>
    </reaction>
</comment>
<comment type="cofactor">
    <cofactor evidence="1">
        <name>Mg(2+)</name>
        <dbReference type="ChEBI" id="CHEBI:18420"/>
    </cofactor>
    <cofactor evidence="1">
        <name>Mn(2+)</name>
        <dbReference type="ChEBI" id="CHEBI:29035"/>
    </cofactor>
    <text evidence="1">Mg(2+). Can also accept Mn(2+).</text>
</comment>
<comment type="pathway">
    <text evidence="1">Metabolic intermediate biosynthesis; acetyl-CoA biosynthesis; acetyl-CoA from acetate: step 1/2.</text>
</comment>
<comment type="subunit">
    <text evidence="1">Homodimer.</text>
</comment>
<comment type="subcellular location">
    <subcellularLocation>
        <location evidence="1">Cytoplasm</location>
    </subcellularLocation>
</comment>
<comment type="similarity">
    <text evidence="1">Belongs to the acetokinase family.</text>
</comment>
<gene>
    <name evidence="1" type="primary">ackA</name>
    <name type="ordered locus">YPTS_2691</name>
</gene>
<keyword id="KW-0067">ATP-binding</keyword>
<keyword id="KW-0963">Cytoplasm</keyword>
<keyword id="KW-0418">Kinase</keyword>
<keyword id="KW-0460">Magnesium</keyword>
<keyword id="KW-0479">Metal-binding</keyword>
<keyword id="KW-0547">Nucleotide-binding</keyword>
<keyword id="KW-0808">Transferase</keyword>
<accession>B2K830</accession>
<proteinExistence type="inferred from homology"/>
<feature type="chain" id="PRO_1000090006" description="Acetate kinase">
    <location>
        <begin position="1"/>
        <end position="400"/>
    </location>
</feature>
<feature type="active site" description="Proton donor/acceptor" evidence="1">
    <location>
        <position position="150"/>
    </location>
</feature>
<feature type="binding site" evidence="1">
    <location>
        <position position="10"/>
    </location>
    <ligand>
        <name>Mg(2+)</name>
        <dbReference type="ChEBI" id="CHEBI:18420"/>
    </ligand>
</feature>
<feature type="binding site" evidence="1">
    <location>
        <position position="17"/>
    </location>
    <ligand>
        <name>ATP</name>
        <dbReference type="ChEBI" id="CHEBI:30616"/>
    </ligand>
</feature>
<feature type="binding site" evidence="1">
    <location>
        <position position="91"/>
    </location>
    <ligand>
        <name>substrate</name>
    </ligand>
</feature>
<feature type="binding site" evidence="1">
    <location>
        <begin position="210"/>
        <end position="214"/>
    </location>
    <ligand>
        <name>ATP</name>
        <dbReference type="ChEBI" id="CHEBI:30616"/>
    </ligand>
</feature>
<feature type="binding site" evidence="1">
    <location>
        <begin position="285"/>
        <end position="287"/>
    </location>
    <ligand>
        <name>ATP</name>
        <dbReference type="ChEBI" id="CHEBI:30616"/>
    </ligand>
</feature>
<feature type="binding site" evidence="1">
    <location>
        <begin position="333"/>
        <end position="337"/>
    </location>
    <ligand>
        <name>ATP</name>
        <dbReference type="ChEBI" id="CHEBI:30616"/>
    </ligand>
</feature>
<feature type="binding site" evidence="1">
    <location>
        <position position="387"/>
    </location>
    <ligand>
        <name>Mg(2+)</name>
        <dbReference type="ChEBI" id="CHEBI:18420"/>
    </ligand>
</feature>
<feature type="site" description="Transition state stabilizer" evidence="1">
    <location>
        <position position="182"/>
    </location>
</feature>
<feature type="site" description="Transition state stabilizer" evidence="1">
    <location>
        <position position="243"/>
    </location>
</feature>
<name>ACKA_YERPB</name>
<sequence>MSSKLVLVLNCGSSSLKFAIIDATNGEEHISGLAECFHLPEARIKWKVDGGKQEAALGAGAAHSEALNFIVNTILAQKPALSAQLTAIGHRIVHGGEKFTSSVIVTEDVIQGIKDSIPFAPLHNPAHLIGIAEALKSFPNLADKNVAVFDTAFHQTMPEESYLYALPYSLYKDHGIRRYGAHGTSHFYVSQEAAKILNKPLGELNVITCHLGNGGSVTAVRNGKCVDTSMGLTPLEGLVMGTRSGDLDPAIIFHLHDAMGMSVDQINTLLTKESGLLGLTEVTSDCRYVEDNYATKADAKRAMDVFCHRLAKYIGSYTALMDGRLDAVVFTGGIGENAAMVRELTLDKLGLLGFEIDHERNMAARFGKSGTITKDSSRLALVIPTNEELVIAQDAARLTA</sequence>